<name>LEUC_ECO55</name>
<gene>
    <name evidence="1" type="primary">leuC</name>
    <name type="ordered locus">EC55989_0070</name>
</gene>
<proteinExistence type="inferred from homology"/>
<organism>
    <name type="scientific">Escherichia coli (strain 55989 / EAEC)</name>
    <dbReference type="NCBI Taxonomy" id="585055"/>
    <lineage>
        <taxon>Bacteria</taxon>
        <taxon>Pseudomonadati</taxon>
        <taxon>Pseudomonadota</taxon>
        <taxon>Gammaproteobacteria</taxon>
        <taxon>Enterobacterales</taxon>
        <taxon>Enterobacteriaceae</taxon>
        <taxon>Escherichia</taxon>
    </lineage>
</organism>
<accession>B7L4J3</accession>
<feature type="chain" id="PRO_1000149362" description="3-isopropylmalate dehydratase large subunit">
    <location>
        <begin position="1"/>
        <end position="466"/>
    </location>
</feature>
<feature type="binding site" evidence="1">
    <location>
        <position position="347"/>
    </location>
    <ligand>
        <name>[4Fe-4S] cluster</name>
        <dbReference type="ChEBI" id="CHEBI:49883"/>
    </ligand>
</feature>
<feature type="binding site" evidence="1">
    <location>
        <position position="407"/>
    </location>
    <ligand>
        <name>[4Fe-4S] cluster</name>
        <dbReference type="ChEBI" id="CHEBI:49883"/>
    </ligand>
</feature>
<feature type="binding site" evidence="1">
    <location>
        <position position="410"/>
    </location>
    <ligand>
        <name>[4Fe-4S] cluster</name>
        <dbReference type="ChEBI" id="CHEBI:49883"/>
    </ligand>
</feature>
<keyword id="KW-0004">4Fe-4S</keyword>
<keyword id="KW-0028">Amino-acid biosynthesis</keyword>
<keyword id="KW-0100">Branched-chain amino acid biosynthesis</keyword>
<keyword id="KW-0408">Iron</keyword>
<keyword id="KW-0411">Iron-sulfur</keyword>
<keyword id="KW-0432">Leucine biosynthesis</keyword>
<keyword id="KW-0456">Lyase</keyword>
<keyword id="KW-0479">Metal-binding</keyword>
<keyword id="KW-1185">Reference proteome</keyword>
<reference key="1">
    <citation type="journal article" date="2009" name="PLoS Genet.">
        <title>Organised genome dynamics in the Escherichia coli species results in highly diverse adaptive paths.</title>
        <authorList>
            <person name="Touchon M."/>
            <person name="Hoede C."/>
            <person name="Tenaillon O."/>
            <person name="Barbe V."/>
            <person name="Baeriswyl S."/>
            <person name="Bidet P."/>
            <person name="Bingen E."/>
            <person name="Bonacorsi S."/>
            <person name="Bouchier C."/>
            <person name="Bouvet O."/>
            <person name="Calteau A."/>
            <person name="Chiapello H."/>
            <person name="Clermont O."/>
            <person name="Cruveiller S."/>
            <person name="Danchin A."/>
            <person name="Diard M."/>
            <person name="Dossat C."/>
            <person name="Karoui M.E."/>
            <person name="Frapy E."/>
            <person name="Garry L."/>
            <person name="Ghigo J.M."/>
            <person name="Gilles A.M."/>
            <person name="Johnson J."/>
            <person name="Le Bouguenec C."/>
            <person name="Lescat M."/>
            <person name="Mangenot S."/>
            <person name="Martinez-Jehanne V."/>
            <person name="Matic I."/>
            <person name="Nassif X."/>
            <person name="Oztas S."/>
            <person name="Petit M.A."/>
            <person name="Pichon C."/>
            <person name="Rouy Z."/>
            <person name="Ruf C.S."/>
            <person name="Schneider D."/>
            <person name="Tourret J."/>
            <person name="Vacherie B."/>
            <person name="Vallenet D."/>
            <person name="Medigue C."/>
            <person name="Rocha E.P.C."/>
            <person name="Denamur E."/>
        </authorList>
    </citation>
    <scope>NUCLEOTIDE SEQUENCE [LARGE SCALE GENOMIC DNA]</scope>
    <source>
        <strain>55989 / EAEC</strain>
    </source>
</reference>
<evidence type="ECO:0000255" key="1">
    <source>
        <dbReference type="HAMAP-Rule" id="MF_01026"/>
    </source>
</evidence>
<comment type="function">
    <text evidence="1">Catalyzes the isomerization between 2-isopropylmalate and 3-isopropylmalate, via the formation of 2-isopropylmaleate.</text>
</comment>
<comment type="catalytic activity">
    <reaction evidence="1">
        <text>(2R,3S)-3-isopropylmalate = (2S)-2-isopropylmalate</text>
        <dbReference type="Rhea" id="RHEA:32287"/>
        <dbReference type="ChEBI" id="CHEBI:1178"/>
        <dbReference type="ChEBI" id="CHEBI:35121"/>
        <dbReference type="EC" id="4.2.1.33"/>
    </reaction>
</comment>
<comment type="cofactor">
    <cofactor evidence="1">
        <name>[4Fe-4S] cluster</name>
        <dbReference type="ChEBI" id="CHEBI:49883"/>
    </cofactor>
    <text evidence="1">Binds 1 [4Fe-4S] cluster per subunit.</text>
</comment>
<comment type="pathway">
    <text evidence="1">Amino-acid biosynthesis; L-leucine biosynthesis; L-leucine from 3-methyl-2-oxobutanoate: step 2/4.</text>
</comment>
<comment type="subunit">
    <text evidence="1">Heterodimer of LeuC and LeuD.</text>
</comment>
<comment type="similarity">
    <text evidence="1">Belongs to the aconitase/IPM isomerase family. LeuC type 1 subfamily.</text>
</comment>
<dbReference type="EC" id="4.2.1.33" evidence="1"/>
<dbReference type="EMBL" id="CU928145">
    <property type="protein sequence ID" value="CAU95957.1"/>
    <property type="molecule type" value="Genomic_DNA"/>
</dbReference>
<dbReference type="RefSeq" id="WP_001140680.1">
    <property type="nucleotide sequence ID" value="NC_011748.1"/>
</dbReference>
<dbReference type="SMR" id="B7L4J3"/>
<dbReference type="KEGG" id="eck:EC55989_0070"/>
<dbReference type="HOGENOM" id="CLU_006714_3_4_6"/>
<dbReference type="UniPathway" id="UPA00048">
    <property type="reaction ID" value="UER00071"/>
</dbReference>
<dbReference type="Proteomes" id="UP000000746">
    <property type="component" value="Chromosome"/>
</dbReference>
<dbReference type="GO" id="GO:0003861">
    <property type="term" value="F:3-isopropylmalate dehydratase activity"/>
    <property type="evidence" value="ECO:0007669"/>
    <property type="project" value="UniProtKB-UniRule"/>
</dbReference>
<dbReference type="GO" id="GO:0051539">
    <property type="term" value="F:4 iron, 4 sulfur cluster binding"/>
    <property type="evidence" value="ECO:0007669"/>
    <property type="project" value="UniProtKB-KW"/>
</dbReference>
<dbReference type="GO" id="GO:0046872">
    <property type="term" value="F:metal ion binding"/>
    <property type="evidence" value="ECO:0007669"/>
    <property type="project" value="UniProtKB-KW"/>
</dbReference>
<dbReference type="GO" id="GO:0009098">
    <property type="term" value="P:L-leucine biosynthetic process"/>
    <property type="evidence" value="ECO:0007669"/>
    <property type="project" value="UniProtKB-UniRule"/>
</dbReference>
<dbReference type="CDD" id="cd01583">
    <property type="entry name" value="IPMI"/>
    <property type="match status" value="1"/>
</dbReference>
<dbReference type="FunFam" id="3.30.499.10:FF:000006">
    <property type="entry name" value="3-isopropylmalate dehydratase large subunit"/>
    <property type="match status" value="1"/>
</dbReference>
<dbReference type="FunFam" id="3.30.499.10:FF:000007">
    <property type="entry name" value="3-isopropylmalate dehydratase large subunit"/>
    <property type="match status" value="1"/>
</dbReference>
<dbReference type="Gene3D" id="3.30.499.10">
    <property type="entry name" value="Aconitase, domain 3"/>
    <property type="match status" value="2"/>
</dbReference>
<dbReference type="HAMAP" id="MF_01026">
    <property type="entry name" value="LeuC_type1"/>
    <property type="match status" value="1"/>
</dbReference>
<dbReference type="InterPro" id="IPR004430">
    <property type="entry name" value="3-IsopropMal_deHydase_lsu"/>
</dbReference>
<dbReference type="InterPro" id="IPR015931">
    <property type="entry name" value="Acnase/IPM_dHydase_lsu_aba_1/3"/>
</dbReference>
<dbReference type="InterPro" id="IPR001030">
    <property type="entry name" value="Acoase/IPM_deHydtase_lsu_aba"/>
</dbReference>
<dbReference type="InterPro" id="IPR018136">
    <property type="entry name" value="Aconitase_4Fe-4S_BS"/>
</dbReference>
<dbReference type="InterPro" id="IPR036008">
    <property type="entry name" value="Aconitase_4Fe-4S_dom"/>
</dbReference>
<dbReference type="InterPro" id="IPR050067">
    <property type="entry name" value="IPM_dehydratase_rel_enz"/>
</dbReference>
<dbReference type="InterPro" id="IPR033941">
    <property type="entry name" value="IPMI_cat"/>
</dbReference>
<dbReference type="NCBIfam" id="TIGR00170">
    <property type="entry name" value="leuC"/>
    <property type="match status" value="1"/>
</dbReference>
<dbReference type="NCBIfam" id="NF004016">
    <property type="entry name" value="PRK05478.1"/>
    <property type="match status" value="1"/>
</dbReference>
<dbReference type="NCBIfam" id="NF009116">
    <property type="entry name" value="PRK12466.1"/>
    <property type="match status" value="1"/>
</dbReference>
<dbReference type="PANTHER" id="PTHR43822:SF9">
    <property type="entry name" value="3-ISOPROPYLMALATE DEHYDRATASE"/>
    <property type="match status" value="1"/>
</dbReference>
<dbReference type="PANTHER" id="PTHR43822">
    <property type="entry name" value="HOMOACONITASE, MITOCHONDRIAL-RELATED"/>
    <property type="match status" value="1"/>
</dbReference>
<dbReference type="Pfam" id="PF00330">
    <property type="entry name" value="Aconitase"/>
    <property type="match status" value="1"/>
</dbReference>
<dbReference type="PRINTS" id="PR00415">
    <property type="entry name" value="ACONITASE"/>
</dbReference>
<dbReference type="SUPFAM" id="SSF53732">
    <property type="entry name" value="Aconitase iron-sulfur domain"/>
    <property type="match status" value="1"/>
</dbReference>
<dbReference type="PROSITE" id="PS00450">
    <property type="entry name" value="ACONITASE_1"/>
    <property type="match status" value="1"/>
</dbReference>
<dbReference type="PROSITE" id="PS01244">
    <property type="entry name" value="ACONITASE_2"/>
    <property type="match status" value="1"/>
</dbReference>
<sequence length="466" mass="49912">MAKTLYEKLFDAHVVYEAENETPLLYIDRHLVHEVTSPQAFDGLRTHGRPVRQPGKTFATMDHNVSTQTKDINACGEMARIQMQELIKNCKEFGVELYDLNHPYQGIVHVMGPEQGVTLPGMTIVCGDSHTATHGAFGALAFGIGTSEVEHVLATQTLKQGRAKTMKIEVQGKAAPGITAKDIVLAIIGKTGSAGGTGHVVEFCGEAIRDLSMEGRMTLCNMAIEMGAKAGLVAPDETTFNYVKGRLHAPKGKDFDDAVAYWKTLQTDEGATFDTVVTLQAEEISPQVTWGTNPGQVISVNDNIPDPASFADPVERASAEKALAYMGLKPGIPLTEVAIDKVFIGSCTNSRIEDLRAAAEIAKGRKVAPGVQALVVPGSGPVKAQAEAEGLDKIFIEAGFEWRLPGCSMCLAMNNDRLNPGERCASTSNRNFEGRQGRGGRTHLVSPAMAAAAAVTGHFADIRNIK</sequence>
<protein>
    <recommendedName>
        <fullName evidence="1">3-isopropylmalate dehydratase large subunit</fullName>
        <ecNumber evidence="1">4.2.1.33</ecNumber>
    </recommendedName>
    <alternativeName>
        <fullName evidence="1">Alpha-IPM isomerase</fullName>
        <shortName evidence="1">IPMI</shortName>
    </alternativeName>
    <alternativeName>
        <fullName evidence="1">Isopropylmalate isomerase</fullName>
    </alternativeName>
</protein>